<accession>P48955</accession>
<reference key="1">
    <citation type="journal article" date="1995" name="J. Mol. Biol.">
        <title>Complete sequence of the mitochondrial DNA of the rhodophyte Chondrus crispus (Gigartinales). Gene content and genome organization.</title>
        <authorList>
            <person name="Leblanc C."/>
            <person name="Boyen C."/>
            <person name="Richard O."/>
            <person name="Bonnard G."/>
            <person name="Grienenberger J.-M."/>
            <person name="Kloareg B."/>
        </authorList>
    </citation>
    <scope>NUCLEOTIDE SEQUENCE [GENOMIC DNA]</scope>
    <source>
        <tissue>Apices</tissue>
    </source>
</reference>
<comment type="subcellular location">
    <subcellularLocation>
        <location>Mitochondrion</location>
    </subcellularLocation>
</comment>
<comment type="similarity">
    <text evidence="1">Belongs to the universal ribosomal protein uL16 family.</text>
</comment>
<proteinExistence type="inferred from homology"/>
<evidence type="ECO:0000305" key="1"/>
<gene>
    <name type="primary">RPL16</name>
</gene>
<keyword id="KW-0496">Mitochondrion</keyword>
<keyword id="KW-0687">Ribonucleoprotein</keyword>
<keyword id="KW-0689">Ribosomal protein</keyword>
<name>RM16_CHOCR</name>
<feature type="chain" id="PRO_0000062323" description="Large ribosomal subunit protein uL16m">
    <location>
        <begin position="1"/>
        <end position="138"/>
    </location>
</feature>
<dbReference type="EMBL" id="Z47547">
    <property type="protein sequence ID" value="CAA87602.1"/>
    <property type="molecule type" value="Genomic_DNA"/>
</dbReference>
<dbReference type="PIR" id="S59086">
    <property type="entry name" value="S59086"/>
</dbReference>
<dbReference type="RefSeq" id="NP_062481.1">
    <property type="nucleotide sequence ID" value="NC_001677.2"/>
</dbReference>
<dbReference type="SMR" id="P48955"/>
<dbReference type="GeneID" id="809401"/>
<dbReference type="KEGG" id="ccp:ChcroMp02"/>
<dbReference type="GO" id="GO:0005762">
    <property type="term" value="C:mitochondrial large ribosomal subunit"/>
    <property type="evidence" value="ECO:0007669"/>
    <property type="project" value="TreeGrafter"/>
</dbReference>
<dbReference type="GO" id="GO:0019843">
    <property type="term" value="F:rRNA binding"/>
    <property type="evidence" value="ECO:0007669"/>
    <property type="project" value="InterPro"/>
</dbReference>
<dbReference type="GO" id="GO:0003735">
    <property type="term" value="F:structural constituent of ribosome"/>
    <property type="evidence" value="ECO:0007669"/>
    <property type="project" value="InterPro"/>
</dbReference>
<dbReference type="GO" id="GO:0032543">
    <property type="term" value="P:mitochondrial translation"/>
    <property type="evidence" value="ECO:0007669"/>
    <property type="project" value="TreeGrafter"/>
</dbReference>
<dbReference type="CDD" id="cd01433">
    <property type="entry name" value="Ribosomal_L16_L10e"/>
    <property type="match status" value="1"/>
</dbReference>
<dbReference type="Gene3D" id="3.90.1170.10">
    <property type="entry name" value="Ribosomal protein L10e/L16"/>
    <property type="match status" value="1"/>
</dbReference>
<dbReference type="InterPro" id="IPR047873">
    <property type="entry name" value="Ribosomal_uL16"/>
</dbReference>
<dbReference type="InterPro" id="IPR000114">
    <property type="entry name" value="Ribosomal_uL16_bact-type"/>
</dbReference>
<dbReference type="InterPro" id="IPR020798">
    <property type="entry name" value="Ribosomal_uL16_CS"/>
</dbReference>
<dbReference type="InterPro" id="IPR016180">
    <property type="entry name" value="Ribosomal_uL16_dom"/>
</dbReference>
<dbReference type="InterPro" id="IPR036920">
    <property type="entry name" value="Ribosomal_uL16_sf"/>
</dbReference>
<dbReference type="PANTHER" id="PTHR12220">
    <property type="entry name" value="50S/60S RIBOSOMAL PROTEIN L16"/>
    <property type="match status" value="1"/>
</dbReference>
<dbReference type="PANTHER" id="PTHR12220:SF13">
    <property type="entry name" value="LARGE RIBOSOMAL SUBUNIT PROTEIN UL16M"/>
    <property type="match status" value="1"/>
</dbReference>
<dbReference type="Pfam" id="PF00252">
    <property type="entry name" value="Ribosomal_L16"/>
    <property type="match status" value="1"/>
</dbReference>
<dbReference type="PRINTS" id="PR00060">
    <property type="entry name" value="RIBOSOMALL16"/>
</dbReference>
<dbReference type="SUPFAM" id="SSF54686">
    <property type="entry name" value="Ribosomal protein L16p/L10e"/>
    <property type="match status" value="1"/>
</dbReference>
<dbReference type="PROSITE" id="PS00701">
    <property type="entry name" value="RIBOSOMAL_L16_2"/>
    <property type="match status" value="1"/>
</dbReference>
<organism>
    <name type="scientific">Chondrus crispus</name>
    <name type="common">Carrageen Irish moss</name>
    <name type="synonym">Polymorpha crispa</name>
    <dbReference type="NCBI Taxonomy" id="2769"/>
    <lineage>
        <taxon>Eukaryota</taxon>
        <taxon>Rhodophyta</taxon>
        <taxon>Florideophyceae</taxon>
        <taxon>Rhodymeniophycidae</taxon>
        <taxon>Gigartinales</taxon>
        <taxon>Gigartinaceae</taxon>
        <taxon>Chondrus</taxon>
    </lineage>
</organism>
<protein>
    <recommendedName>
        <fullName evidence="1">Large ribosomal subunit protein uL16m</fullName>
    </recommendedName>
    <alternativeName>
        <fullName>60S ribosomal protein L16, mitochondrial</fullName>
    </alternativeName>
</protein>
<sequence>MVIIKKTHNSFSLKHRHCNHTLKFGRLGLKILSFSKITENQFNLIERLSLKFLKNLSGNKKLIKIWSLVPFNLTLTKLSSEARMGKGKGAVYSRAFFLRPGSILFEFEGVSKHQLTQISSILRKKTSFRIVEVQLPSK</sequence>
<geneLocation type="mitochondrion"/>